<feature type="chain" id="PRO_0000108621" description="Ribosomal RNA small subunit methyltransferase H">
    <location>
        <begin position="1"/>
        <end position="313"/>
    </location>
</feature>
<feature type="binding site" evidence="1">
    <location>
        <begin position="35"/>
        <end position="37"/>
    </location>
    <ligand>
        <name>S-adenosyl-L-methionine</name>
        <dbReference type="ChEBI" id="CHEBI:59789"/>
    </ligand>
</feature>
<feature type="binding site" evidence="1">
    <location>
        <position position="55"/>
    </location>
    <ligand>
        <name>S-adenosyl-L-methionine</name>
        <dbReference type="ChEBI" id="CHEBI:59789"/>
    </ligand>
</feature>
<feature type="binding site" evidence="1">
    <location>
        <position position="79"/>
    </location>
    <ligand>
        <name>S-adenosyl-L-methionine</name>
        <dbReference type="ChEBI" id="CHEBI:59789"/>
    </ligand>
</feature>
<feature type="binding site" evidence="1">
    <location>
        <position position="101"/>
    </location>
    <ligand>
        <name>S-adenosyl-L-methionine</name>
        <dbReference type="ChEBI" id="CHEBI:59789"/>
    </ligand>
</feature>
<feature type="binding site" evidence="1">
    <location>
        <position position="108"/>
    </location>
    <ligand>
        <name>S-adenosyl-L-methionine</name>
        <dbReference type="ChEBI" id="CHEBI:59789"/>
    </ligand>
</feature>
<reference key="1">
    <citation type="journal article" date="2001" name="Nature">
        <title>Genome sequence of enterohaemorrhagic Escherichia coli O157:H7.</title>
        <authorList>
            <person name="Perna N.T."/>
            <person name="Plunkett G. III"/>
            <person name="Burland V."/>
            <person name="Mau B."/>
            <person name="Glasner J.D."/>
            <person name="Rose D.J."/>
            <person name="Mayhew G.F."/>
            <person name="Evans P.S."/>
            <person name="Gregor J."/>
            <person name="Kirkpatrick H.A."/>
            <person name="Posfai G."/>
            <person name="Hackett J."/>
            <person name="Klink S."/>
            <person name="Boutin A."/>
            <person name="Shao Y."/>
            <person name="Miller L."/>
            <person name="Grotbeck E.J."/>
            <person name="Davis N.W."/>
            <person name="Lim A."/>
            <person name="Dimalanta E.T."/>
            <person name="Potamousis K."/>
            <person name="Apodaca J."/>
            <person name="Anantharaman T.S."/>
            <person name="Lin J."/>
            <person name="Yen G."/>
            <person name="Schwartz D.C."/>
            <person name="Welch R.A."/>
            <person name="Blattner F.R."/>
        </authorList>
    </citation>
    <scope>NUCLEOTIDE SEQUENCE [LARGE SCALE GENOMIC DNA]</scope>
    <source>
        <strain>O157:H7 / EDL933 / ATCC 700927 / EHEC</strain>
    </source>
</reference>
<reference key="2">
    <citation type="journal article" date="2001" name="DNA Res.">
        <title>Complete genome sequence of enterohemorrhagic Escherichia coli O157:H7 and genomic comparison with a laboratory strain K-12.</title>
        <authorList>
            <person name="Hayashi T."/>
            <person name="Makino K."/>
            <person name="Ohnishi M."/>
            <person name="Kurokawa K."/>
            <person name="Ishii K."/>
            <person name="Yokoyama K."/>
            <person name="Han C.-G."/>
            <person name="Ohtsubo E."/>
            <person name="Nakayama K."/>
            <person name="Murata T."/>
            <person name="Tanaka M."/>
            <person name="Tobe T."/>
            <person name="Iida T."/>
            <person name="Takami H."/>
            <person name="Honda T."/>
            <person name="Sasakawa C."/>
            <person name="Ogasawara N."/>
            <person name="Yasunaga T."/>
            <person name="Kuhara S."/>
            <person name="Shiba T."/>
            <person name="Hattori M."/>
            <person name="Shinagawa H."/>
        </authorList>
    </citation>
    <scope>NUCLEOTIDE SEQUENCE [LARGE SCALE GENOMIC DNA]</scope>
    <source>
        <strain>O157:H7 / Sakai / RIMD 0509952 / EHEC</strain>
    </source>
</reference>
<comment type="function">
    <text evidence="1">Specifically methylates the N4 position of cytidine in position 1402 (C1402) of 16S rRNA.</text>
</comment>
<comment type="catalytic activity">
    <reaction evidence="1">
        <text>cytidine(1402) in 16S rRNA + S-adenosyl-L-methionine = N(4)-methylcytidine(1402) in 16S rRNA + S-adenosyl-L-homocysteine + H(+)</text>
        <dbReference type="Rhea" id="RHEA:42928"/>
        <dbReference type="Rhea" id="RHEA-COMP:10286"/>
        <dbReference type="Rhea" id="RHEA-COMP:10287"/>
        <dbReference type="ChEBI" id="CHEBI:15378"/>
        <dbReference type="ChEBI" id="CHEBI:57856"/>
        <dbReference type="ChEBI" id="CHEBI:59789"/>
        <dbReference type="ChEBI" id="CHEBI:74506"/>
        <dbReference type="ChEBI" id="CHEBI:82748"/>
        <dbReference type="EC" id="2.1.1.199"/>
    </reaction>
</comment>
<comment type="subcellular location">
    <subcellularLocation>
        <location evidence="1">Cytoplasm</location>
    </subcellularLocation>
</comment>
<comment type="similarity">
    <text evidence="1">Belongs to the methyltransferase superfamily. RsmH family.</text>
</comment>
<name>RSMH_ECO57</name>
<organism>
    <name type="scientific">Escherichia coli O157:H7</name>
    <dbReference type="NCBI Taxonomy" id="83334"/>
    <lineage>
        <taxon>Bacteria</taxon>
        <taxon>Pseudomonadati</taxon>
        <taxon>Pseudomonadota</taxon>
        <taxon>Gammaproteobacteria</taxon>
        <taxon>Enterobacterales</taxon>
        <taxon>Enterobacteriaceae</taxon>
        <taxon>Escherichia</taxon>
    </lineage>
</organism>
<accession>P60391</accession>
<accession>P18595</accession>
<keyword id="KW-0963">Cytoplasm</keyword>
<keyword id="KW-0489">Methyltransferase</keyword>
<keyword id="KW-1185">Reference proteome</keyword>
<keyword id="KW-0698">rRNA processing</keyword>
<keyword id="KW-0949">S-adenosyl-L-methionine</keyword>
<keyword id="KW-0808">Transferase</keyword>
<protein>
    <recommendedName>
        <fullName evidence="1">Ribosomal RNA small subunit methyltransferase H</fullName>
        <ecNumber evidence="1">2.1.1.199</ecNumber>
    </recommendedName>
    <alternativeName>
        <fullName evidence="1">16S rRNA m(4)C1402 methyltransferase</fullName>
    </alternativeName>
    <alternativeName>
        <fullName evidence="1">rRNA (cytosine-N(4)-)-methyltransferase RsmH</fullName>
    </alternativeName>
</protein>
<dbReference type="EC" id="2.1.1.199" evidence="1"/>
<dbReference type="EMBL" id="AE005174">
    <property type="protein sequence ID" value="AAG54386.1"/>
    <property type="molecule type" value="Genomic_DNA"/>
</dbReference>
<dbReference type="EMBL" id="BA000007">
    <property type="protein sequence ID" value="BAB33509.1"/>
    <property type="molecule type" value="Genomic_DNA"/>
</dbReference>
<dbReference type="PIR" id="F85490">
    <property type="entry name" value="F85490"/>
</dbReference>
<dbReference type="PIR" id="F90639">
    <property type="entry name" value="F90639"/>
</dbReference>
<dbReference type="RefSeq" id="NP_308113.1">
    <property type="nucleotide sequence ID" value="NC_002695.1"/>
</dbReference>
<dbReference type="RefSeq" id="WP_000970479.1">
    <property type="nucleotide sequence ID" value="NZ_VOAI01000002.1"/>
</dbReference>
<dbReference type="SMR" id="P60391"/>
<dbReference type="STRING" id="155864.Z0092"/>
<dbReference type="GeneID" id="86862592"/>
<dbReference type="GeneID" id="913531"/>
<dbReference type="KEGG" id="ece:Z0092"/>
<dbReference type="KEGG" id="ecs:ECs_0086"/>
<dbReference type="PATRIC" id="fig|386585.9.peg.186"/>
<dbReference type="eggNOG" id="COG0275">
    <property type="taxonomic scope" value="Bacteria"/>
</dbReference>
<dbReference type="HOGENOM" id="CLU_038422_2_0_6"/>
<dbReference type="OMA" id="NPAKRTF"/>
<dbReference type="Proteomes" id="UP000000558">
    <property type="component" value="Chromosome"/>
</dbReference>
<dbReference type="Proteomes" id="UP000002519">
    <property type="component" value="Chromosome"/>
</dbReference>
<dbReference type="GO" id="GO:0005737">
    <property type="term" value="C:cytoplasm"/>
    <property type="evidence" value="ECO:0007669"/>
    <property type="project" value="UniProtKB-SubCell"/>
</dbReference>
<dbReference type="GO" id="GO:0071424">
    <property type="term" value="F:rRNA (cytosine-N4-)-methyltransferase activity"/>
    <property type="evidence" value="ECO:0007669"/>
    <property type="project" value="UniProtKB-UniRule"/>
</dbReference>
<dbReference type="GO" id="GO:0070475">
    <property type="term" value="P:rRNA base methylation"/>
    <property type="evidence" value="ECO:0007669"/>
    <property type="project" value="UniProtKB-UniRule"/>
</dbReference>
<dbReference type="FunFam" id="1.10.150.170:FF:000001">
    <property type="entry name" value="Ribosomal RNA small subunit methyltransferase H"/>
    <property type="match status" value="1"/>
</dbReference>
<dbReference type="Gene3D" id="1.10.150.170">
    <property type="entry name" value="Putative methyltransferase TM0872, insert domain"/>
    <property type="match status" value="1"/>
</dbReference>
<dbReference type="Gene3D" id="3.40.50.150">
    <property type="entry name" value="Vaccinia Virus protein VP39"/>
    <property type="match status" value="1"/>
</dbReference>
<dbReference type="HAMAP" id="MF_01007">
    <property type="entry name" value="16SrRNA_methyltr_H"/>
    <property type="match status" value="1"/>
</dbReference>
<dbReference type="InterPro" id="IPR002903">
    <property type="entry name" value="RsmH"/>
</dbReference>
<dbReference type="InterPro" id="IPR023397">
    <property type="entry name" value="SAM-dep_MeTrfase_MraW_recog"/>
</dbReference>
<dbReference type="InterPro" id="IPR029063">
    <property type="entry name" value="SAM-dependent_MTases_sf"/>
</dbReference>
<dbReference type="NCBIfam" id="TIGR00006">
    <property type="entry name" value="16S rRNA (cytosine(1402)-N(4))-methyltransferase RsmH"/>
    <property type="match status" value="1"/>
</dbReference>
<dbReference type="PANTHER" id="PTHR11265:SF0">
    <property type="entry name" value="12S RRNA N4-METHYLCYTIDINE METHYLTRANSFERASE"/>
    <property type="match status" value="1"/>
</dbReference>
<dbReference type="PANTHER" id="PTHR11265">
    <property type="entry name" value="S-ADENOSYL-METHYLTRANSFERASE MRAW"/>
    <property type="match status" value="1"/>
</dbReference>
<dbReference type="Pfam" id="PF01795">
    <property type="entry name" value="Methyltransf_5"/>
    <property type="match status" value="1"/>
</dbReference>
<dbReference type="PIRSF" id="PIRSF004486">
    <property type="entry name" value="MraW"/>
    <property type="match status" value="1"/>
</dbReference>
<dbReference type="SUPFAM" id="SSF81799">
    <property type="entry name" value="Putative methyltransferase TM0872, insert domain"/>
    <property type="match status" value="1"/>
</dbReference>
<dbReference type="SUPFAM" id="SSF53335">
    <property type="entry name" value="S-adenosyl-L-methionine-dependent methyltransferases"/>
    <property type="match status" value="1"/>
</dbReference>
<gene>
    <name evidence="1" type="primary">rsmH</name>
    <name type="synonym">mraW</name>
    <name type="ordered locus">Z0092</name>
    <name type="ordered locus">ECs0086</name>
</gene>
<proteinExistence type="inferred from homology"/>
<evidence type="ECO:0000255" key="1">
    <source>
        <dbReference type="HAMAP-Rule" id="MF_01007"/>
    </source>
</evidence>
<sequence length="313" mass="34878">MMENYKHTTVLLDEAVNGLNIRPDGIYIDGTFGRGGHSRLILSQLGEEGRLLAIDRDPQAIAVAKTIDDPRFSIIHGPFSALGEYVAERDLIGKIDGILLDLGVSSPQLDDAERGFSFMRDGPLDMRMDPTRGQSAAEWLQTAEEADIAWVLKTYGEERFAKRIARAIVERNREQPMTRTKELAEVVAAATPVKDKFKHPATRTFQAVRIWVNSELEEIEQALKSSLNVLAPGGRLSIISFHSLEDRIVKRFMRENSRGPQVPAGLPMTEEQLKKLGGRQLRALGKLMPGEEEVAENPRARSSVLRIAERTNA</sequence>